<proteinExistence type="evidence at protein level"/>
<protein>
    <recommendedName>
        <fullName>Histidine--tRNA ligase</fullName>
        <ecNumber>6.1.1.21</ecNumber>
    </recommendedName>
    <alternativeName>
        <fullName>Histidyl-tRNA synthetase</fullName>
        <shortName>HisRS</shortName>
    </alternativeName>
</protein>
<comment type="catalytic activity">
    <reaction>
        <text>tRNA(His) + L-histidine + ATP = L-histidyl-tRNA(His) + AMP + diphosphate + H(+)</text>
        <dbReference type="Rhea" id="RHEA:17313"/>
        <dbReference type="Rhea" id="RHEA-COMP:9665"/>
        <dbReference type="Rhea" id="RHEA-COMP:9689"/>
        <dbReference type="ChEBI" id="CHEBI:15378"/>
        <dbReference type="ChEBI" id="CHEBI:30616"/>
        <dbReference type="ChEBI" id="CHEBI:33019"/>
        <dbReference type="ChEBI" id="CHEBI:57595"/>
        <dbReference type="ChEBI" id="CHEBI:78442"/>
        <dbReference type="ChEBI" id="CHEBI:78527"/>
        <dbReference type="ChEBI" id="CHEBI:456215"/>
        <dbReference type="EC" id="6.1.1.21"/>
    </reaction>
</comment>
<comment type="subunit">
    <text evidence="1">Homodimer.</text>
</comment>
<comment type="subcellular location">
    <subcellularLocation>
        <location evidence="1">Cytoplasm</location>
    </subcellularLocation>
</comment>
<comment type="similarity">
    <text evidence="2">Belongs to the class-II aminoacyl-tRNA synthetase family.</text>
</comment>
<name>SYH_MYCPN</name>
<organism>
    <name type="scientific">Mycoplasma pneumoniae (strain ATCC 29342 / M129 / Subtype 1)</name>
    <name type="common">Mycoplasmoides pneumoniae</name>
    <dbReference type="NCBI Taxonomy" id="272634"/>
    <lineage>
        <taxon>Bacteria</taxon>
        <taxon>Bacillati</taxon>
        <taxon>Mycoplasmatota</taxon>
        <taxon>Mycoplasmoidales</taxon>
        <taxon>Mycoplasmoidaceae</taxon>
        <taxon>Mycoplasmoides</taxon>
    </lineage>
</organism>
<feature type="chain" id="PRO_0000136205" description="Histidine--tRNA ligase">
    <location>
        <begin position="1"/>
        <end position="414"/>
    </location>
</feature>
<sequence>MSVLQKPRGVKDWYGEELIYFNWTVHQITNLAWKWGFSEVKTPLLEYAEAFKRTNANADIVKKELYEFHDKSNRLLALRPEATAGIVRLVCENKLLQPQNYPLRLFTIGTMYRYERPQSNRYREHYQFSCEVIGDTNPTVLLDTLLLGHAIIQQLGIEGVILKLNNLGNSATIQQWNQALQAYLTQFKAQLTELSQSRLSTNPLRILDDKVDGQLPFISDAPQIEQFLDAEQQALNTWLQQQLTQQQVPFEWNPTLVRGLDYYTGVVFEFVKDDTTVLAGGVYDNLVEELGGTPTKALGFACGIERSINCLSAVKKQAILANQPPRLLVIGLTEAALEKLLQLSLGWRAYHPVTIYPKVIRIINGIRAAQRLGYRFLGVIGGNNLEQQTITVKDLATEQQTTYTWDEFRQRQVL</sequence>
<keyword id="KW-0030">Aminoacyl-tRNA synthetase</keyword>
<keyword id="KW-0067">ATP-binding</keyword>
<keyword id="KW-0963">Cytoplasm</keyword>
<keyword id="KW-0436">Ligase</keyword>
<keyword id="KW-0547">Nucleotide-binding</keyword>
<keyword id="KW-0648">Protein biosynthesis</keyword>
<keyword id="KW-1185">Reference proteome</keyword>
<gene>
    <name type="primary">hisS</name>
    <name type="ordered locus">MPN_045</name>
    <name type="ORF">MP109</name>
</gene>
<accession>P75069</accession>
<reference key="1">
    <citation type="journal article" date="1996" name="Nucleic Acids Res.">
        <title>Complete sequence analysis of the genome of the bacterium Mycoplasma pneumoniae.</title>
        <authorList>
            <person name="Himmelreich R."/>
            <person name="Hilbert H."/>
            <person name="Plagens H."/>
            <person name="Pirkl E."/>
            <person name="Li B.-C."/>
            <person name="Herrmann R."/>
        </authorList>
    </citation>
    <scope>NUCLEOTIDE SEQUENCE [LARGE SCALE GENOMIC DNA]</scope>
    <source>
        <strain>ATCC 29342 / M129 / Subtype 1</strain>
    </source>
</reference>
<reference key="2">
    <citation type="journal article" date="2000" name="Electrophoresis">
        <title>Towards a two-dimensional proteome map of Mycoplasma pneumoniae.</title>
        <authorList>
            <person name="Regula J.T."/>
            <person name="Ueberle B."/>
            <person name="Boguth G."/>
            <person name="Goerg A."/>
            <person name="Schnoelzer M."/>
            <person name="Herrmann R."/>
            <person name="Frank R."/>
        </authorList>
    </citation>
    <scope>IDENTIFICATION BY MASS SPECTROMETRY</scope>
    <source>
        <strain>ATCC 29342 / M129 / Subtype 1</strain>
    </source>
</reference>
<evidence type="ECO:0000250" key="1"/>
<evidence type="ECO:0000305" key="2"/>
<dbReference type="EC" id="6.1.1.21"/>
<dbReference type="EMBL" id="U00089">
    <property type="protein sequence ID" value="AAB95757.1"/>
    <property type="molecule type" value="Genomic_DNA"/>
</dbReference>
<dbReference type="PIR" id="S73435">
    <property type="entry name" value="S73435"/>
</dbReference>
<dbReference type="RefSeq" id="NP_109733.1">
    <property type="nucleotide sequence ID" value="NC_000912.1"/>
</dbReference>
<dbReference type="RefSeq" id="WP_010874402.1">
    <property type="nucleotide sequence ID" value="NZ_OU342337.1"/>
</dbReference>
<dbReference type="SMR" id="P75069"/>
<dbReference type="STRING" id="272634.MPN_045"/>
<dbReference type="EnsemblBacteria" id="AAB95757">
    <property type="protein sequence ID" value="AAB95757"/>
    <property type="gene ID" value="MPN_045"/>
</dbReference>
<dbReference type="GeneID" id="66609317"/>
<dbReference type="KEGG" id="mpn:MPN_045"/>
<dbReference type="PATRIC" id="fig|272634.6.peg.45"/>
<dbReference type="HOGENOM" id="CLU_025113_1_1_14"/>
<dbReference type="OrthoDB" id="9800814at2"/>
<dbReference type="BioCyc" id="MPNE272634:G1GJ3-62-MONOMER"/>
<dbReference type="BRENDA" id="6.1.1.21">
    <property type="organism ID" value="3534"/>
</dbReference>
<dbReference type="Proteomes" id="UP000000808">
    <property type="component" value="Chromosome"/>
</dbReference>
<dbReference type="GO" id="GO:0005737">
    <property type="term" value="C:cytoplasm"/>
    <property type="evidence" value="ECO:0007669"/>
    <property type="project" value="UniProtKB-SubCell"/>
</dbReference>
<dbReference type="GO" id="GO:0005524">
    <property type="term" value="F:ATP binding"/>
    <property type="evidence" value="ECO:0007669"/>
    <property type="project" value="UniProtKB-UniRule"/>
</dbReference>
<dbReference type="GO" id="GO:0004821">
    <property type="term" value="F:histidine-tRNA ligase activity"/>
    <property type="evidence" value="ECO:0007669"/>
    <property type="project" value="UniProtKB-UniRule"/>
</dbReference>
<dbReference type="GO" id="GO:0006427">
    <property type="term" value="P:histidyl-tRNA aminoacylation"/>
    <property type="evidence" value="ECO:0007669"/>
    <property type="project" value="UniProtKB-UniRule"/>
</dbReference>
<dbReference type="CDD" id="cd00773">
    <property type="entry name" value="HisRS-like_core"/>
    <property type="match status" value="1"/>
</dbReference>
<dbReference type="Gene3D" id="3.40.50.800">
    <property type="entry name" value="Anticodon-binding domain"/>
    <property type="match status" value="1"/>
</dbReference>
<dbReference type="Gene3D" id="3.30.930.10">
    <property type="entry name" value="Bira Bifunctional Protein, Domain 2"/>
    <property type="match status" value="1"/>
</dbReference>
<dbReference type="HAMAP" id="MF_00127">
    <property type="entry name" value="His_tRNA_synth"/>
    <property type="match status" value="1"/>
</dbReference>
<dbReference type="InterPro" id="IPR006195">
    <property type="entry name" value="aa-tRNA-synth_II"/>
</dbReference>
<dbReference type="InterPro" id="IPR045864">
    <property type="entry name" value="aa-tRNA-synth_II/BPL/LPL"/>
</dbReference>
<dbReference type="InterPro" id="IPR004154">
    <property type="entry name" value="Anticodon-bd"/>
</dbReference>
<dbReference type="InterPro" id="IPR036621">
    <property type="entry name" value="Anticodon-bd_dom_sf"/>
</dbReference>
<dbReference type="InterPro" id="IPR015807">
    <property type="entry name" value="His-tRNA-ligase"/>
</dbReference>
<dbReference type="InterPro" id="IPR041715">
    <property type="entry name" value="HisRS-like_core"/>
</dbReference>
<dbReference type="InterPro" id="IPR004516">
    <property type="entry name" value="HisRS/HisZ"/>
</dbReference>
<dbReference type="NCBIfam" id="TIGR00442">
    <property type="entry name" value="hisS"/>
    <property type="match status" value="1"/>
</dbReference>
<dbReference type="PANTHER" id="PTHR43707:SF1">
    <property type="entry name" value="HISTIDINE--TRNA LIGASE, MITOCHONDRIAL-RELATED"/>
    <property type="match status" value="1"/>
</dbReference>
<dbReference type="PANTHER" id="PTHR43707">
    <property type="entry name" value="HISTIDYL-TRNA SYNTHETASE"/>
    <property type="match status" value="1"/>
</dbReference>
<dbReference type="Pfam" id="PF03129">
    <property type="entry name" value="HGTP_anticodon"/>
    <property type="match status" value="1"/>
</dbReference>
<dbReference type="Pfam" id="PF13393">
    <property type="entry name" value="tRNA-synt_His"/>
    <property type="match status" value="1"/>
</dbReference>
<dbReference type="PIRSF" id="PIRSF001549">
    <property type="entry name" value="His-tRNA_synth"/>
    <property type="match status" value="1"/>
</dbReference>
<dbReference type="SUPFAM" id="SSF52954">
    <property type="entry name" value="Class II aaRS ABD-related"/>
    <property type="match status" value="1"/>
</dbReference>
<dbReference type="SUPFAM" id="SSF55681">
    <property type="entry name" value="Class II aaRS and biotin synthetases"/>
    <property type="match status" value="1"/>
</dbReference>
<dbReference type="PROSITE" id="PS50862">
    <property type="entry name" value="AA_TRNA_LIGASE_II"/>
    <property type="match status" value="1"/>
</dbReference>